<dbReference type="EMBL" id="BA000034">
    <property type="protein sequence ID" value="BAC64694.1"/>
    <property type="molecule type" value="Genomic_DNA"/>
</dbReference>
<dbReference type="RefSeq" id="WP_011054209.1">
    <property type="nucleotide sequence ID" value="NC_004606.1"/>
</dbReference>
<dbReference type="SMR" id="P0DA11"/>
<dbReference type="KEGG" id="sps:SPs1599"/>
<dbReference type="HOGENOM" id="CLU_058671_1_2_9"/>
<dbReference type="GO" id="GO:0005886">
    <property type="term" value="C:plasma membrane"/>
    <property type="evidence" value="ECO:0007669"/>
    <property type="project" value="UniProtKB-SubCell"/>
</dbReference>
<dbReference type="CDD" id="cd10432">
    <property type="entry name" value="BI-1-like_bacterial"/>
    <property type="match status" value="1"/>
</dbReference>
<dbReference type="InterPro" id="IPR006214">
    <property type="entry name" value="Bax_inhibitor_1-related"/>
</dbReference>
<dbReference type="PANTHER" id="PTHR23291">
    <property type="entry name" value="BAX INHIBITOR-RELATED"/>
    <property type="match status" value="1"/>
</dbReference>
<dbReference type="PANTHER" id="PTHR23291:SF50">
    <property type="entry name" value="PROTEIN LIFEGUARD 4"/>
    <property type="match status" value="1"/>
</dbReference>
<dbReference type="Pfam" id="PF01027">
    <property type="entry name" value="Bax1-I"/>
    <property type="match status" value="1"/>
</dbReference>
<keyword id="KW-1003">Cell membrane</keyword>
<keyword id="KW-0472">Membrane</keyword>
<keyword id="KW-0812">Transmembrane</keyword>
<keyword id="KW-1133">Transmembrane helix</keyword>
<protein>
    <recommendedName>
        <fullName>Uncharacterized membrane protein SPs1599</fullName>
    </recommendedName>
</protein>
<proteinExistence type="inferred from homology"/>
<gene>
    <name type="ordered locus">SPs1599</name>
</gene>
<comment type="subcellular location">
    <subcellularLocation>
        <location evidence="2">Cell membrane</location>
        <topology evidence="2">Multi-pass membrane protein</topology>
    </subcellularLocation>
</comment>
<comment type="similarity">
    <text evidence="2">Belongs to the BI1 family.</text>
</comment>
<reference key="1">
    <citation type="journal article" date="2003" name="Genome Res.">
        <title>Genome sequence of an M3 strain of Streptococcus pyogenes reveals a large-scale genomic rearrangement in invasive strains and new insights into phage evolution.</title>
        <authorList>
            <person name="Nakagawa I."/>
            <person name="Kurokawa K."/>
            <person name="Yamashita A."/>
            <person name="Nakata M."/>
            <person name="Tomiyasu Y."/>
            <person name="Okahashi N."/>
            <person name="Kawabata S."/>
            <person name="Yamazaki K."/>
            <person name="Shiba T."/>
            <person name="Yasunaga T."/>
            <person name="Hayashi H."/>
            <person name="Hattori M."/>
            <person name="Hamada S."/>
        </authorList>
    </citation>
    <scope>NUCLEOTIDE SEQUENCE [LARGE SCALE GENOMIC DNA]</scope>
    <source>
        <strain>SSI-1</strain>
    </source>
</reference>
<accession>P0DA11</accession>
<accession>Q79WC6</accession>
<accession>Q8K8I9</accession>
<organism>
    <name type="scientific">Streptococcus pyogenes serotype M3 (strain SSI-1)</name>
    <dbReference type="NCBI Taxonomy" id="193567"/>
    <lineage>
        <taxon>Bacteria</taxon>
        <taxon>Bacillati</taxon>
        <taxon>Bacillota</taxon>
        <taxon>Bacilli</taxon>
        <taxon>Lactobacillales</taxon>
        <taxon>Streptococcaceae</taxon>
        <taxon>Streptococcus</taxon>
    </lineage>
</organism>
<feature type="chain" id="PRO_0000411293" description="Uncharacterized membrane protein SPs1599">
    <location>
        <begin position="1"/>
        <end position="229"/>
    </location>
</feature>
<feature type="transmembrane region" description="Helical" evidence="1">
    <location>
        <begin position="21"/>
        <end position="41"/>
    </location>
</feature>
<feature type="transmembrane region" description="Helical" evidence="1">
    <location>
        <begin position="56"/>
        <end position="76"/>
    </location>
</feature>
<feature type="transmembrane region" description="Helical" evidence="1">
    <location>
        <begin position="83"/>
        <end position="103"/>
    </location>
</feature>
<feature type="transmembrane region" description="Helical" evidence="1">
    <location>
        <begin position="109"/>
        <end position="129"/>
    </location>
</feature>
<feature type="transmembrane region" description="Helical" evidence="1">
    <location>
        <begin position="141"/>
        <end position="161"/>
    </location>
</feature>
<feature type="transmembrane region" description="Helical" evidence="1">
    <location>
        <begin position="162"/>
        <end position="182"/>
    </location>
</feature>
<feature type="transmembrane region" description="Helical" evidence="1">
    <location>
        <begin position="202"/>
        <end position="222"/>
    </location>
</feature>
<sequence length="229" mass="24944">MNDHVIYTQSDVGLNQFFAKIYSLVGMGVGLSAFVSYLMLYPFRENLISILVNQPMIYYGAAIIELILVFVASGAARKNTPAALPIFLIYAALNGFTLSFIIVAYAQTTVFQAFLSSAAVFFAMSIIGVKTKRDMSGLRKAMFAALIGVVVASLINLFIGSGMMSYVISVISVLIFSGLIASDNQMIKRVYQATNGQVGDGWAVAMALSLYLDFINLFISLLRIFGRND</sequence>
<name>Y260_STRPQ</name>
<evidence type="ECO:0000255" key="1"/>
<evidence type="ECO:0000305" key="2"/>